<gene>
    <name evidence="1" type="primary">rlmH</name>
    <name type="ordered locus">VC_0951</name>
</gene>
<accession>Q9KTF1</accession>
<protein>
    <recommendedName>
        <fullName evidence="1">Ribosomal RNA large subunit methyltransferase H</fullName>
        <ecNumber evidence="1">2.1.1.177</ecNumber>
    </recommendedName>
    <alternativeName>
        <fullName evidence="1">23S rRNA (pseudouridine1915-N3)-methyltransferase</fullName>
    </alternativeName>
    <alternativeName>
        <fullName evidence="1">23S rRNA m3Psi1915 methyltransferase</fullName>
    </alternativeName>
    <alternativeName>
        <fullName evidence="1">rRNA (pseudouridine-N3-)-methyltransferase RlmH</fullName>
    </alternativeName>
</protein>
<organism>
    <name type="scientific">Vibrio cholerae serotype O1 (strain ATCC 39315 / El Tor Inaba N16961)</name>
    <dbReference type="NCBI Taxonomy" id="243277"/>
    <lineage>
        <taxon>Bacteria</taxon>
        <taxon>Pseudomonadati</taxon>
        <taxon>Pseudomonadota</taxon>
        <taxon>Gammaproteobacteria</taxon>
        <taxon>Vibrionales</taxon>
        <taxon>Vibrionaceae</taxon>
        <taxon>Vibrio</taxon>
    </lineage>
</organism>
<dbReference type="EC" id="2.1.1.177" evidence="1"/>
<dbReference type="EMBL" id="AE003852">
    <property type="protein sequence ID" value="AAF94113.1"/>
    <property type="molecule type" value="Genomic_DNA"/>
</dbReference>
<dbReference type="PIR" id="B82260">
    <property type="entry name" value="B82260"/>
</dbReference>
<dbReference type="RefSeq" id="NP_230598.1">
    <property type="nucleotide sequence ID" value="NC_002505.1"/>
</dbReference>
<dbReference type="RefSeq" id="WP_000701620.1">
    <property type="nucleotide sequence ID" value="NZ_LT906614.1"/>
</dbReference>
<dbReference type="SMR" id="Q9KTF1"/>
<dbReference type="STRING" id="243277.VC_0951"/>
<dbReference type="DNASU" id="2614171"/>
<dbReference type="EnsemblBacteria" id="AAF94113">
    <property type="protein sequence ID" value="AAF94113"/>
    <property type="gene ID" value="VC_0951"/>
</dbReference>
<dbReference type="GeneID" id="93951526"/>
<dbReference type="KEGG" id="vch:VC_0951"/>
<dbReference type="PATRIC" id="fig|243277.26.peg.906"/>
<dbReference type="eggNOG" id="COG1576">
    <property type="taxonomic scope" value="Bacteria"/>
</dbReference>
<dbReference type="HOGENOM" id="CLU_100552_1_0_6"/>
<dbReference type="Proteomes" id="UP000000584">
    <property type="component" value="Chromosome 1"/>
</dbReference>
<dbReference type="GO" id="GO:0005737">
    <property type="term" value="C:cytoplasm"/>
    <property type="evidence" value="ECO:0007669"/>
    <property type="project" value="UniProtKB-SubCell"/>
</dbReference>
<dbReference type="GO" id="GO:0070038">
    <property type="term" value="F:rRNA (pseudouridine-N3-)-methyltransferase activity"/>
    <property type="evidence" value="ECO:0007669"/>
    <property type="project" value="UniProtKB-UniRule"/>
</dbReference>
<dbReference type="CDD" id="cd18081">
    <property type="entry name" value="RlmH-like"/>
    <property type="match status" value="1"/>
</dbReference>
<dbReference type="Gene3D" id="3.40.1280.10">
    <property type="match status" value="1"/>
</dbReference>
<dbReference type="HAMAP" id="MF_00658">
    <property type="entry name" value="23SrRNA_methyltr_H"/>
    <property type="match status" value="1"/>
</dbReference>
<dbReference type="InterPro" id="IPR029028">
    <property type="entry name" value="Alpha/beta_knot_MTases"/>
</dbReference>
<dbReference type="InterPro" id="IPR003742">
    <property type="entry name" value="RlmH-like"/>
</dbReference>
<dbReference type="InterPro" id="IPR029026">
    <property type="entry name" value="tRNA_m1G_MTases_N"/>
</dbReference>
<dbReference type="NCBIfam" id="NF000984">
    <property type="entry name" value="PRK00103.1-1"/>
    <property type="match status" value="1"/>
</dbReference>
<dbReference type="NCBIfam" id="NF000986">
    <property type="entry name" value="PRK00103.1-4"/>
    <property type="match status" value="1"/>
</dbReference>
<dbReference type="NCBIfam" id="TIGR00246">
    <property type="entry name" value="tRNA_RlmH_YbeA"/>
    <property type="match status" value="1"/>
</dbReference>
<dbReference type="PANTHER" id="PTHR33603">
    <property type="entry name" value="METHYLTRANSFERASE"/>
    <property type="match status" value="1"/>
</dbReference>
<dbReference type="PANTHER" id="PTHR33603:SF1">
    <property type="entry name" value="RIBOSOMAL RNA LARGE SUBUNIT METHYLTRANSFERASE H"/>
    <property type="match status" value="1"/>
</dbReference>
<dbReference type="Pfam" id="PF02590">
    <property type="entry name" value="SPOUT_MTase"/>
    <property type="match status" value="1"/>
</dbReference>
<dbReference type="PIRSF" id="PIRSF004505">
    <property type="entry name" value="MT_bac"/>
    <property type="match status" value="1"/>
</dbReference>
<dbReference type="SUPFAM" id="SSF75217">
    <property type="entry name" value="alpha/beta knot"/>
    <property type="match status" value="1"/>
</dbReference>
<name>RLMH_VIBCH</name>
<proteinExistence type="inferred from homology"/>
<evidence type="ECO:0000255" key="1">
    <source>
        <dbReference type="HAMAP-Rule" id="MF_00658"/>
    </source>
</evidence>
<sequence>MKIQLIAVGTKMPKWVEEGFQEYRRRFPHDMPLELVEITAGKRGKNADIARILQKEGEAMLAAVPKGNRIVTLDIPGKRWDTEELAVQLESWKLDGRDVSILIGGPEGLAPACKAAADQSWSLSPLTLPHPLVRVVMAESLYRAWSITTNHPYHRE</sequence>
<comment type="function">
    <text evidence="1">Specifically methylates the pseudouridine at position 1915 (m3Psi1915) in 23S rRNA.</text>
</comment>
<comment type="catalytic activity">
    <reaction evidence="1">
        <text>pseudouridine(1915) in 23S rRNA + S-adenosyl-L-methionine = N(3)-methylpseudouridine(1915) in 23S rRNA + S-adenosyl-L-homocysteine + H(+)</text>
        <dbReference type="Rhea" id="RHEA:42752"/>
        <dbReference type="Rhea" id="RHEA-COMP:10221"/>
        <dbReference type="Rhea" id="RHEA-COMP:10222"/>
        <dbReference type="ChEBI" id="CHEBI:15378"/>
        <dbReference type="ChEBI" id="CHEBI:57856"/>
        <dbReference type="ChEBI" id="CHEBI:59789"/>
        <dbReference type="ChEBI" id="CHEBI:65314"/>
        <dbReference type="ChEBI" id="CHEBI:74486"/>
        <dbReference type="EC" id="2.1.1.177"/>
    </reaction>
</comment>
<comment type="subunit">
    <text evidence="1">Homodimer.</text>
</comment>
<comment type="subcellular location">
    <subcellularLocation>
        <location evidence="1">Cytoplasm</location>
    </subcellularLocation>
</comment>
<comment type="similarity">
    <text evidence="1">Belongs to the RNA methyltransferase RlmH family.</text>
</comment>
<feature type="chain" id="PRO_0000198206" description="Ribosomal RNA large subunit methyltransferase H">
    <location>
        <begin position="1"/>
        <end position="156"/>
    </location>
</feature>
<feature type="binding site" evidence="1">
    <location>
        <position position="73"/>
    </location>
    <ligand>
        <name>S-adenosyl-L-methionine</name>
        <dbReference type="ChEBI" id="CHEBI:59789"/>
    </ligand>
</feature>
<feature type="binding site" evidence="1">
    <location>
        <position position="104"/>
    </location>
    <ligand>
        <name>S-adenosyl-L-methionine</name>
        <dbReference type="ChEBI" id="CHEBI:59789"/>
    </ligand>
</feature>
<feature type="binding site" evidence="1">
    <location>
        <begin position="123"/>
        <end position="128"/>
    </location>
    <ligand>
        <name>S-adenosyl-L-methionine</name>
        <dbReference type="ChEBI" id="CHEBI:59789"/>
    </ligand>
</feature>
<keyword id="KW-0963">Cytoplasm</keyword>
<keyword id="KW-0489">Methyltransferase</keyword>
<keyword id="KW-1185">Reference proteome</keyword>
<keyword id="KW-0698">rRNA processing</keyword>
<keyword id="KW-0949">S-adenosyl-L-methionine</keyword>
<keyword id="KW-0808">Transferase</keyword>
<reference key="1">
    <citation type="journal article" date="2000" name="Nature">
        <title>DNA sequence of both chromosomes of the cholera pathogen Vibrio cholerae.</title>
        <authorList>
            <person name="Heidelberg J.F."/>
            <person name="Eisen J.A."/>
            <person name="Nelson W.C."/>
            <person name="Clayton R.A."/>
            <person name="Gwinn M.L."/>
            <person name="Dodson R.J."/>
            <person name="Haft D.H."/>
            <person name="Hickey E.K."/>
            <person name="Peterson J.D."/>
            <person name="Umayam L.A."/>
            <person name="Gill S.R."/>
            <person name="Nelson K.E."/>
            <person name="Read T.D."/>
            <person name="Tettelin H."/>
            <person name="Richardson D.L."/>
            <person name="Ermolaeva M.D."/>
            <person name="Vamathevan J.J."/>
            <person name="Bass S."/>
            <person name="Qin H."/>
            <person name="Dragoi I."/>
            <person name="Sellers P."/>
            <person name="McDonald L.A."/>
            <person name="Utterback T.R."/>
            <person name="Fleischmann R.D."/>
            <person name="Nierman W.C."/>
            <person name="White O."/>
            <person name="Salzberg S.L."/>
            <person name="Smith H.O."/>
            <person name="Colwell R.R."/>
            <person name="Mekalanos J.J."/>
            <person name="Venter J.C."/>
            <person name="Fraser C.M."/>
        </authorList>
    </citation>
    <scope>NUCLEOTIDE SEQUENCE [LARGE SCALE GENOMIC DNA]</scope>
    <source>
        <strain>ATCC 39315 / El Tor Inaba N16961</strain>
    </source>
</reference>